<gene>
    <name evidence="3" type="primary">INVC</name>
    <name evidence="5" type="ordered locus">At3g06500</name>
    <name evidence="6" type="ORF">F5E6.17</name>
</gene>
<keyword id="KW-0119">Carbohydrate metabolism</keyword>
<keyword id="KW-0326">Glycosidase</keyword>
<keyword id="KW-0378">Hydrolase</keyword>
<keyword id="KW-0496">Mitochondrion</keyword>
<keyword id="KW-0597">Phosphoprotein</keyword>
<keyword id="KW-1185">Reference proteome</keyword>
<keyword id="KW-0809">Transit peptide</keyword>
<accession>B9DFA8</accession>
<accession>Q0WWN9</accession>
<accession>Q7Y209</accession>
<accession>Q9C8Z1</accession>
<organism>
    <name type="scientific">Arabidopsis thaliana</name>
    <name type="common">Mouse-ear cress</name>
    <dbReference type="NCBI Taxonomy" id="3702"/>
    <lineage>
        <taxon>Eukaryota</taxon>
        <taxon>Viridiplantae</taxon>
        <taxon>Streptophyta</taxon>
        <taxon>Embryophyta</taxon>
        <taxon>Tracheophyta</taxon>
        <taxon>Spermatophyta</taxon>
        <taxon>Magnoliopsida</taxon>
        <taxon>eudicotyledons</taxon>
        <taxon>Gunneridae</taxon>
        <taxon>Pentapetalae</taxon>
        <taxon>rosids</taxon>
        <taxon>malvids</taxon>
        <taxon>Brassicales</taxon>
        <taxon>Brassicaceae</taxon>
        <taxon>Camelineae</taxon>
        <taxon>Arabidopsis</taxon>
    </lineage>
</organism>
<comment type="function">
    <text evidence="2">Mitochondrial invertase that cleaves sucrose into glucose and fructose and is involved in the regulation of aerial tissue development and floral transition. May be modulating hormone balance in relation to the radicle emergence.</text>
</comment>
<comment type="catalytic activity">
    <reaction evidence="2">
        <text>Hydrolysis of terminal non-reducing beta-D-fructofuranoside residues in beta-D-fructofuranosides.</text>
        <dbReference type="EC" id="3.2.1.26"/>
    </reaction>
</comment>
<comment type="biophysicochemical properties">
    <phDependence>
        <text evidence="2">Optimum pH is 6.0.</text>
    </phDependence>
</comment>
<comment type="subcellular location">
    <subcellularLocation>
        <location evidence="2">Mitochondrion</location>
    </subcellularLocation>
</comment>
<comment type="tissue specificity">
    <text evidence="2">Expressed in seedlings, roots and flowers.</text>
</comment>
<comment type="disruption phenotype">
    <text evidence="2">Delayed germination time, reduced plant growth, delayed flowering and reduced oxygen consumption in the dark.</text>
</comment>
<comment type="similarity">
    <text evidence="4">Belongs to the glycosyl hydrolase 100 family.</text>
</comment>
<comment type="sequence caution" evidence="4">
    <conflict type="erroneous initiation">
        <sequence resource="EMBL-CDS" id="AAG51337"/>
    </conflict>
    <text>Truncated N-terminus.</text>
</comment>
<dbReference type="EC" id="3.2.1.26" evidence="2"/>
<dbReference type="EMBL" id="AC020580">
    <property type="protein sequence ID" value="AAG51337.1"/>
    <property type="status" value="ALT_INIT"/>
    <property type="molecule type" value="Genomic_DNA"/>
</dbReference>
<dbReference type="EMBL" id="CP002686">
    <property type="protein sequence ID" value="AEE74403.1"/>
    <property type="molecule type" value="Genomic_DNA"/>
</dbReference>
<dbReference type="EMBL" id="BT008650">
    <property type="protein sequence ID" value="AAP40464.1"/>
    <property type="molecule type" value="mRNA"/>
</dbReference>
<dbReference type="EMBL" id="AK316698">
    <property type="protein sequence ID" value="BAH19425.1"/>
    <property type="molecule type" value="mRNA"/>
</dbReference>
<dbReference type="EMBL" id="AK226304">
    <property type="protein sequence ID" value="BAE98459.1"/>
    <property type="molecule type" value="mRNA"/>
</dbReference>
<dbReference type="SMR" id="B9DFA8"/>
<dbReference type="FunCoup" id="B9DFA8">
    <property type="interactions" value="47"/>
</dbReference>
<dbReference type="STRING" id="3702.B9DFA8"/>
<dbReference type="CAZy" id="GH100">
    <property type="family name" value="Glycoside Hydrolase Family 100"/>
</dbReference>
<dbReference type="iPTMnet" id="B9DFA8"/>
<dbReference type="PaxDb" id="3702-AT3G06500.1"/>
<dbReference type="ProteomicsDB" id="247217"/>
<dbReference type="EnsemblPlants" id="AT3G06500.1">
    <property type="protein sequence ID" value="AT3G06500.1"/>
    <property type="gene ID" value="AT3G06500"/>
</dbReference>
<dbReference type="GeneID" id="819828"/>
<dbReference type="Gramene" id="AT3G06500.1">
    <property type="protein sequence ID" value="AT3G06500.1"/>
    <property type="gene ID" value="AT3G06500"/>
</dbReference>
<dbReference type="KEGG" id="ath:AT3G06500"/>
<dbReference type="Araport" id="AT3G06500"/>
<dbReference type="TAIR" id="AT3G06500">
    <property type="gene designation" value="A/N-INVC"/>
</dbReference>
<dbReference type="eggNOG" id="ENOG502QT23">
    <property type="taxonomic scope" value="Eukaryota"/>
</dbReference>
<dbReference type="HOGENOM" id="CLU_020846_0_0_1"/>
<dbReference type="InParanoid" id="B9DFA8"/>
<dbReference type="OMA" id="CCRILIG"/>
<dbReference type="PRO" id="PR:B9DFA8"/>
<dbReference type="Proteomes" id="UP000006548">
    <property type="component" value="Chromosome 3"/>
</dbReference>
<dbReference type="ExpressionAtlas" id="B9DFA8">
    <property type="expression patterns" value="baseline and differential"/>
</dbReference>
<dbReference type="GO" id="GO:0005739">
    <property type="term" value="C:mitochondrion"/>
    <property type="evidence" value="ECO:0000314"/>
    <property type="project" value="TAIR"/>
</dbReference>
<dbReference type="GO" id="GO:0033926">
    <property type="term" value="F:endo-alpha-N-acetylgalactosaminidase activity"/>
    <property type="evidence" value="ECO:0007669"/>
    <property type="project" value="InterPro"/>
</dbReference>
<dbReference type="GO" id="GO:0004575">
    <property type="term" value="F:sucrose alpha-glucosidase activity"/>
    <property type="evidence" value="ECO:0000314"/>
    <property type="project" value="TAIR"/>
</dbReference>
<dbReference type="GO" id="GO:0005975">
    <property type="term" value="P:carbohydrate metabolic process"/>
    <property type="evidence" value="ECO:0007669"/>
    <property type="project" value="InterPro"/>
</dbReference>
<dbReference type="GO" id="GO:0007623">
    <property type="term" value="P:circadian rhythm"/>
    <property type="evidence" value="ECO:0000270"/>
    <property type="project" value="TAIR"/>
</dbReference>
<dbReference type="GO" id="GO:0010029">
    <property type="term" value="P:regulation of seed germination"/>
    <property type="evidence" value="ECO:0000315"/>
    <property type="project" value="TAIR"/>
</dbReference>
<dbReference type="GO" id="GO:0048510">
    <property type="term" value="P:regulation of timing of transition from vegetative to reproductive phase"/>
    <property type="evidence" value="ECO:0000315"/>
    <property type="project" value="TAIR"/>
</dbReference>
<dbReference type="FunFam" id="1.50.10.10:FF:000001">
    <property type="entry name" value="probable alkaline/neutral invertase B"/>
    <property type="match status" value="1"/>
</dbReference>
<dbReference type="Gene3D" id="1.50.10.10">
    <property type="match status" value="1"/>
</dbReference>
<dbReference type="InterPro" id="IPR008928">
    <property type="entry name" value="6-hairpin_glycosidase_sf"/>
</dbReference>
<dbReference type="InterPro" id="IPR012341">
    <property type="entry name" value="6hp_glycosidase-like_sf"/>
</dbReference>
<dbReference type="InterPro" id="IPR024746">
    <property type="entry name" value="Glyco_hydro_100"/>
</dbReference>
<dbReference type="PANTHER" id="PTHR31916">
    <property type="match status" value="1"/>
</dbReference>
<dbReference type="PANTHER" id="PTHR31916:SF49">
    <property type="entry name" value="ALKALINE_NEUTRAL INVERTASE C, MITOCHONDRIAL"/>
    <property type="match status" value="1"/>
</dbReference>
<dbReference type="Pfam" id="PF12899">
    <property type="entry name" value="Glyco_hydro_100"/>
    <property type="match status" value="1"/>
</dbReference>
<dbReference type="SUPFAM" id="SSF48208">
    <property type="entry name" value="Six-hairpin glycosidases"/>
    <property type="match status" value="1"/>
</dbReference>
<protein>
    <recommendedName>
        <fullName evidence="4">Alkaline/neutral invertase C, mitochondrial</fullName>
        <shortName evidence="3">A/N-INVC</shortName>
        <ecNumber evidence="2">3.2.1.26</ecNumber>
    </recommendedName>
</protein>
<sequence>MNSRSCICVSAMKPCCRFLISFRSSSLFGFSPPNSGKFINSSKLHCTKIDSRSIRSGIHCRRIVLDRNAFCDSDSISWGGGGSRVLRARGSSRGRGRGVLVIPHVASDFRNYSTSSLDSHVNDKSFESMFVKPLVFKEVEKTEGIPKRERGNVGGGKDANFGNVGVRKETERCLSQTEVEKEAWKLLRGAVVNYCGFPVGTVAANDPGDTQTLNYDQVFIRDFVPSAYAFMLDGEGEIVRNFLLHTLQLQSWEKTVDCHSPGPGLMPASFKVKSAPLEGNDGSFEEFLDPDFGGSAIGRVSPVDSGLWWIILLRAYGKLTGDYTLQERIDVQTGIKLILKLCLADGFDMFPTLLVTDGSCMVDRRMGIHGHPLEIQALFYSALRCAREMLIVNDGTKSLVTAVNNRLSALSFHIREYYWVDIKKINEIYRYNTEEYSADATNKFNIYPEQIPTWLVDWIPDKGGYFIGNLQPAHMDFRFFTLGNLWAVISSLGNQEQNEGVMTLIEEKWDDLVANMPLKICFPALEKDEWRIITGSDPKNTPWSYHNGGSWPTLLWQFTLACIKMGKLELAKKAVAVAEKRLKEDEWPEYYDTKSGRFVGKQSRLYQTWTIAGFLAAKKLIEQPEKASLLFWEEDYQLLETCVCGLSKSSGRKNKCSRFTPPRS</sequence>
<proteinExistence type="evidence at protein level"/>
<evidence type="ECO:0000250" key="1">
    <source>
        <dbReference type="UniProtKB" id="Q9LQF2"/>
    </source>
</evidence>
<evidence type="ECO:0000269" key="2">
    <source>
    </source>
</evidence>
<evidence type="ECO:0000303" key="3">
    <source>
    </source>
</evidence>
<evidence type="ECO:0000305" key="4"/>
<evidence type="ECO:0000312" key="5">
    <source>
        <dbReference type="Araport" id="AT3G06500"/>
    </source>
</evidence>
<evidence type="ECO:0000312" key="6">
    <source>
        <dbReference type="EMBL" id="AAG51337.1"/>
    </source>
</evidence>
<reference key="1">
    <citation type="journal article" date="2000" name="Nature">
        <title>Sequence and analysis of chromosome 3 of the plant Arabidopsis thaliana.</title>
        <authorList>
            <person name="Salanoubat M."/>
            <person name="Lemcke K."/>
            <person name="Rieger M."/>
            <person name="Ansorge W."/>
            <person name="Unseld M."/>
            <person name="Fartmann B."/>
            <person name="Valle G."/>
            <person name="Bloecker H."/>
            <person name="Perez-Alonso M."/>
            <person name="Obermaier B."/>
            <person name="Delseny M."/>
            <person name="Boutry M."/>
            <person name="Grivell L.A."/>
            <person name="Mache R."/>
            <person name="Puigdomenech P."/>
            <person name="De Simone V."/>
            <person name="Choisne N."/>
            <person name="Artiguenave F."/>
            <person name="Robert C."/>
            <person name="Brottier P."/>
            <person name="Wincker P."/>
            <person name="Cattolico L."/>
            <person name="Weissenbach J."/>
            <person name="Saurin W."/>
            <person name="Quetier F."/>
            <person name="Schaefer M."/>
            <person name="Mueller-Auer S."/>
            <person name="Gabel C."/>
            <person name="Fuchs M."/>
            <person name="Benes V."/>
            <person name="Wurmbach E."/>
            <person name="Drzonek H."/>
            <person name="Erfle H."/>
            <person name="Jordan N."/>
            <person name="Bangert S."/>
            <person name="Wiedelmann R."/>
            <person name="Kranz H."/>
            <person name="Voss H."/>
            <person name="Holland R."/>
            <person name="Brandt P."/>
            <person name="Nyakatura G."/>
            <person name="Vezzi A."/>
            <person name="D'Angelo M."/>
            <person name="Pallavicini A."/>
            <person name="Toppo S."/>
            <person name="Simionati B."/>
            <person name="Conrad A."/>
            <person name="Hornischer K."/>
            <person name="Kauer G."/>
            <person name="Loehnert T.-H."/>
            <person name="Nordsiek G."/>
            <person name="Reichelt J."/>
            <person name="Scharfe M."/>
            <person name="Schoen O."/>
            <person name="Bargues M."/>
            <person name="Terol J."/>
            <person name="Climent J."/>
            <person name="Navarro P."/>
            <person name="Collado C."/>
            <person name="Perez-Perez A."/>
            <person name="Ottenwaelder B."/>
            <person name="Duchemin D."/>
            <person name="Cooke R."/>
            <person name="Laudie M."/>
            <person name="Berger-Llauro C."/>
            <person name="Purnelle B."/>
            <person name="Masuy D."/>
            <person name="de Haan M."/>
            <person name="Maarse A.C."/>
            <person name="Alcaraz J.-P."/>
            <person name="Cottet A."/>
            <person name="Casacuberta E."/>
            <person name="Monfort A."/>
            <person name="Argiriou A."/>
            <person name="Flores M."/>
            <person name="Liguori R."/>
            <person name="Vitale D."/>
            <person name="Mannhaupt G."/>
            <person name="Haase D."/>
            <person name="Schoof H."/>
            <person name="Rudd S."/>
            <person name="Zaccaria P."/>
            <person name="Mewes H.-W."/>
            <person name="Mayer K.F.X."/>
            <person name="Kaul S."/>
            <person name="Town C.D."/>
            <person name="Koo H.L."/>
            <person name="Tallon L.J."/>
            <person name="Jenkins J."/>
            <person name="Rooney T."/>
            <person name="Rizzo M."/>
            <person name="Walts A."/>
            <person name="Utterback T."/>
            <person name="Fujii C.Y."/>
            <person name="Shea T.P."/>
            <person name="Creasy T.H."/>
            <person name="Haas B."/>
            <person name="Maiti R."/>
            <person name="Wu D."/>
            <person name="Peterson J."/>
            <person name="Van Aken S."/>
            <person name="Pai G."/>
            <person name="Militscher J."/>
            <person name="Sellers P."/>
            <person name="Gill J.E."/>
            <person name="Feldblyum T.V."/>
            <person name="Preuss D."/>
            <person name="Lin X."/>
            <person name="Nierman W.C."/>
            <person name="Salzberg S.L."/>
            <person name="White O."/>
            <person name="Venter J.C."/>
            <person name="Fraser C.M."/>
            <person name="Kaneko T."/>
            <person name="Nakamura Y."/>
            <person name="Sato S."/>
            <person name="Kato T."/>
            <person name="Asamizu E."/>
            <person name="Sasamoto S."/>
            <person name="Kimura T."/>
            <person name="Idesawa K."/>
            <person name="Kawashima K."/>
            <person name="Kishida Y."/>
            <person name="Kiyokawa C."/>
            <person name="Kohara M."/>
            <person name="Matsumoto M."/>
            <person name="Matsuno A."/>
            <person name="Muraki A."/>
            <person name="Nakayama S."/>
            <person name="Nakazaki N."/>
            <person name="Shinpo S."/>
            <person name="Takeuchi C."/>
            <person name="Wada T."/>
            <person name="Watanabe A."/>
            <person name="Yamada M."/>
            <person name="Yasuda M."/>
            <person name="Tabata S."/>
        </authorList>
    </citation>
    <scope>NUCLEOTIDE SEQUENCE [LARGE SCALE GENOMIC DNA]</scope>
    <source>
        <strain>cv. Columbia</strain>
    </source>
</reference>
<reference key="2">
    <citation type="journal article" date="2017" name="Plant J.">
        <title>Araport11: a complete reannotation of the Arabidopsis thaliana reference genome.</title>
        <authorList>
            <person name="Cheng C.Y."/>
            <person name="Krishnakumar V."/>
            <person name="Chan A.P."/>
            <person name="Thibaud-Nissen F."/>
            <person name="Schobel S."/>
            <person name="Town C.D."/>
        </authorList>
    </citation>
    <scope>GENOME REANNOTATION</scope>
    <source>
        <strain>cv. Columbia</strain>
    </source>
</reference>
<reference key="3">
    <citation type="journal article" date="2003" name="Science">
        <title>Empirical analysis of transcriptional activity in the Arabidopsis genome.</title>
        <authorList>
            <person name="Yamada K."/>
            <person name="Lim J."/>
            <person name="Dale J.M."/>
            <person name="Chen H."/>
            <person name="Shinn P."/>
            <person name="Palm C.J."/>
            <person name="Southwick A.M."/>
            <person name="Wu H.C."/>
            <person name="Kim C.J."/>
            <person name="Nguyen M."/>
            <person name="Pham P.K."/>
            <person name="Cheuk R.F."/>
            <person name="Karlin-Newmann G."/>
            <person name="Liu S.X."/>
            <person name="Lam B."/>
            <person name="Sakano H."/>
            <person name="Wu T."/>
            <person name="Yu G."/>
            <person name="Miranda M."/>
            <person name="Quach H.L."/>
            <person name="Tripp M."/>
            <person name="Chang C.H."/>
            <person name="Lee J.M."/>
            <person name="Toriumi M.J."/>
            <person name="Chan M.M."/>
            <person name="Tang C.C."/>
            <person name="Onodera C.S."/>
            <person name="Deng J.M."/>
            <person name="Akiyama K."/>
            <person name="Ansari Y."/>
            <person name="Arakawa T."/>
            <person name="Banh J."/>
            <person name="Banno F."/>
            <person name="Bowser L."/>
            <person name="Brooks S.Y."/>
            <person name="Carninci P."/>
            <person name="Chao Q."/>
            <person name="Choy N."/>
            <person name="Enju A."/>
            <person name="Goldsmith A.D."/>
            <person name="Gurjal M."/>
            <person name="Hansen N.F."/>
            <person name="Hayashizaki Y."/>
            <person name="Johnson-Hopson C."/>
            <person name="Hsuan V.W."/>
            <person name="Iida K."/>
            <person name="Karnes M."/>
            <person name="Khan S."/>
            <person name="Koesema E."/>
            <person name="Ishida J."/>
            <person name="Jiang P.X."/>
            <person name="Jones T."/>
            <person name="Kawai J."/>
            <person name="Kamiya A."/>
            <person name="Meyers C."/>
            <person name="Nakajima M."/>
            <person name="Narusaka M."/>
            <person name="Seki M."/>
            <person name="Sakurai T."/>
            <person name="Satou M."/>
            <person name="Tamse R."/>
            <person name="Vaysberg M."/>
            <person name="Wallender E.K."/>
            <person name="Wong C."/>
            <person name="Yamamura Y."/>
            <person name="Yuan S."/>
            <person name="Shinozaki K."/>
            <person name="Davis R.W."/>
            <person name="Theologis A."/>
            <person name="Ecker J.R."/>
        </authorList>
    </citation>
    <scope>NUCLEOTIDE SEQUENCE [LARGE SCALE MRNA]</scope>
    <source>
        <strain>cv. Columbia</strain>
    </source>
</reference>
<reference key="4">
    <citation type="journal article" date="2009" name="DNA Res.">
        <title>Analysis of multiple occurrences of alternative splicing events in Arabidopsis thaliana using novel sequenced full-length cDNAs.</title>
        <authorList>
            <person name="Iida K."/>
            <person name="Fukami-Kobayashi K."/>
            <person name="Toyoda A."/>
            <person name="Sakaki Y."/>
            <person name="Kobayashi M."/>
            <person name="Seki M."/>
            <person name="Shinozaki K."/>
        </authorList>
    </citation>
    <scope>NUCLEOTIDE SEQUENCE [LARGE SCALE MRNA]</scope>
    <source>
        <strain>cv. Columbia</strain>
    </source>
</reference>
<reference key="5">
    <citation type="submission" date="2006-07" db="EMBL/GenBank/DDBJ databases">
        <title>Large-scale analysis of RIKEN Arabidopsis full-length (RAFL) cDNAs.</title>
        <authorList>
            <person name="Totoki Y."/>
            <person name="Seki M."/>
            <person name="Ishida J."/>
            <person name="Nakajima M."/>
            <person name="Enju A."/>
            <person name="Kamiya A."/>
            <person name="Narusaka M."/>
            <person name="Shin-i T."/>
            <person name="Nakagawa M."/>
            <person name="Sakamoto N."/>
            <person name="Oishi K."/>
            <person name="Kohara Y."/>
            <person name="Kobayashi M."/>
            <person name="Toyoda A."/>
            <person name="Sakaki Y."/>
            <person name="Sakurai T."/>
            <person name="Iida K."/>
            <person name="Akiyama K."/>
            <person name="Satou M."/>
            <person name="Toyoda T."/>
            <person name="Konagaya A."/>
            <person name="Carninci P."/>
            <person name="Kawai J."/>
            <person name="Hayashizaki Y."/>
            <person name="Shinozaki K."/>
        </authorList>
    </citation>
    <scope>NUCLEOTIDE SEQUENCE [LARGE SCALE MRNA]</scope>
    <source>
        <strain>cv. Columbia</strain>
    </source>
</reference>
<reference key="6">
    <citation type="journal article" date="2011" name="J. Exp. Bot.">
        <title>Exploring the neutral invertase-oxidative stress defence connection in Arabidopsis thaliana.</title>
        <authorList>
            <person name="Xiang L."/>
            <person name="Le Roy K."/>
            <person name="Bolouri-Moghaddam M.R."/>
            <person name="Vanhaecke M."/>
            <person name="Lammens W."/>
            <person name="Rolland F."/>
            <person name="Van den Ende W."/>
        </authorList>
    </citation>
    <scope>GENE FAMILY</scope>
</reference>
<reference key="7">
    <citation type="journal article" date="2013" name="Planta">
        <title>A mitochondrial alkaline/neutral invertase isoform (A/N-InvC) functions in developmental energy-demanding processes in Arabidopsis.</title>
        <authorList>
            <person name="Martin M.L."/>
            <person name="Lechner L."/>
            <person name="Zabaleta E.J."/>
            <person name="Salerno G.L."/>
        </authorList>
    </citation>
    <scope>FUNCTION</scope>
    <scope>CATALYTIC ACTIVITY</scope>
    <scope>BIOPHYSICOCHEMICAL PROPERTIES</scope>
    <scope>SUBCELLULAR LOCATION</scope>
    <scope>TISSUE SPECIFICITY</scope>
    <scope>DISRUPTION PHENOTYPE</scope>
</reference>
<feature type="transit peptide" description="Mitochondrion" evidence="4">
    <location>
        <begin position="1"/>
        <end status="unknown"/>
    </location>
</feature>
<feature type="chain" id="PRO_0000431499" description="Alkaline/neutral invertase C, mitochondrial" evidence="4">
    <location>
        <begin status="unknown"/>
        <end position="664"/>
    </location>
</feature>
<feature type="modified residue" description="Phosphoserine" evidence="1">
    <location>
        <position position="41"/>
    </location>
</feature>
<feature type="modified residue" description="Phosphoserine" evidence="1">
    <location>
        <position position="125"/>
    </location>
</feature>
<feature type="modified residue" description="Phosphoserine" evidence="1">
    <location>
        <position position="657"/>
    </location>
</feature>
<feature type="sequence conflict" description="In Ref. 5; BAE98459." evidence="4" ref="5">
    <original>V</original>
    <variation>I</variation>
    <location>
        <position position="9"/>
    </location>
</feature>
<feature type="sequence conflict" description="In Ref. 3; AAP40464." evidence="4" ref="3">
    <original>V</original>
    <variation>F</variation>
    <location>
        <position position="575"/>
    </location>
</feature>
<name>INVC_ARATH</name>